<reference key="1">
    <citation type="journal article" date="2005" name="Science">
        <title>The transcriptional landscape of the mammalian genome.</title>
        <authorList>
            <person name="Carninci P."/>
            <person name="Kasukawa T."/>
            <person name="Katayama S."/>
            <person name="Gough J."/>
            <person name="Frith M.C."/>
            <person name="Maeda N."/>
            <person name="Oyama R."/>
            <person name="Ravasi T."/>
            <person name="Lenhard B."/>
            <person name="Wells C."/>
            <person name="Kodzius R."/>
            <person name="Shimokawa K."/>
            <person name="Bajic V.B."/>
            <person name="Brenner S.E."/>
            <person name="Batalov S."/>
            <person name="Forrest A.R."/>
            <person name="Zavolan M."/>
            <person name="Davis M.J."/>
            <person name="Wilming L.G."/>
            <person name="Aidinis V."/>
            <person name="Allen J.E."/>
            <person name="Ambesi-Impiombato A."/>
            <person name="Apweiler R."/>
            <person name="Aturaliya R.N."/>
            <person name="Bailey T.L."/>
            <person name="Bansal M."/>
            <person name="Baxter L."/>
            <person name="Beisel K.W."/>
            <person name="Bersano T."/>
            <person name="Bono H."/>
            <person name="Chalk A.M."/>
            <person name="Chiu K.P."/>
            <person name="Choudhary V."/>
            <person name="Christoffels A."/>
            <person name="Clutterbuck D.R."/>
            <person name="Crowe M.L."/>
            <person name="Dalla E."/>
            <person name="Dalrymple B.P."/>
            <person name="de Bono B."/>
            <person name="Della Gatta G."/>
            <person name="di Bernardo D."/>
            <person name="Down T."/>
            <person name="Engstrom P."/>
            <person name="Fagiolini M."/>
            <person name="Faulkner G."/>
            <person name="Fletcher C.F."/>
            <person name="Fukushima T."/>
            <person name="Furuno M."/>
            <person name="Futaki S."/>
            <person name="Gariboldi M."/>
            <person name="Georgii-Hemming P."/>
            <person name="Gingeras T.R."/>
            <person name="Gojobori T."/>
            <person name="Green R.E."/>
            <person name="Gustincich S."/>
            <person name="Harbers M."/>
            <person name="Hayashi Y."/>
            <person name="Hensch T.K."/>
            <person name="Hirokawa N."/>
            <person name="Hill D."/>
            <person name="Huminiecki L."/>
            <person name="Iacono M."/>
            <person name="Ikeo K."/>
            <person name="Iwama A."/>
            <person name="Ishikawa T."/>
            <person name="Jakt M."/>
            <person name="Kanapin A."/>
            <person name="Katoh M."/>
            <person name="Kawasawa Y."/>
            <person name="Kelso J."/>
            <person name="Kitamura H."/>
            <person name="Kitano H."/>
            <person name="Kollias G."/>
            <person name="Krishnan S.P."/>
            <person name="Kruger A."/>
            <person name="Kummerfeld S.K."/>
            <person name="Kurochkin I.V."/>
            <person name="Lareau L.F."/>
            <person name="Lazarevic D."/>
            <person name="Lipovich L."/>
            <person name="Liu J."/>
            <person name="Liuni S."/>
            <person name="McWilliam S."/>
            <person name="Madan Babu M."/>
            <person name="Madera M."/>
            <person name="Marchionni L."/>
            <person name="Matsuda H."/>
            <person name="Matsuzawa S."/>
            <person name="Miki H."/>
            <person name="Mignone F."/>
            <person name="Miyake S."/>
            <person name="Morris K."/>
            <person name="Mottagui-Tabar S."/>
            <person name="Mulder N."/>
            <person name="Nakano N."/>
            <person name="Nakauchi H."/>
            <person name="Ng P."/>
            <person name="Nilsson R."/>
            <person name="Nishiguchi S."/>
            <person name="Nishikawa S."/>
            <person name="Nori F."/>
            <person name="Ohara O."/>
            <person name="Okazaki Y."/>
            <person name="Orlando V."/>
            <person name="Pang K.C."/>
            <person name="Pavan W.J."/>
            <person name="Pavesi G."/>
            <person name="Pesole G."/>
            <person name="Petrovsky N."/>
            <person name="Piazza S."/>
            <person name="Reed J."/>
            <person name="Reid J.F."/>
            <person name="Ring B.Z."/>
            <person name="Ringwald M."/>
            <person name="Rost B."/>
            <person name="Ruan Y."/>
            <person name="Salzberg S.L."/>
            <person name="Sandelin A."/>
            <person name="Schneider C."/>
            <person name="Schoenbach C."/>
            <person name="Sekiguchi K."/>
            <person name="Semple C.A."/>
            <person name="Seno S."/>
            <person name="Sessa L."/>
            <person name="Sheng Y."/>
            <person name="Shibata Y."/>
            <person name="Shimada H."/>
            <person name="Shimada K."/>
            <person name="Silva D."/>
            <person name="Sinclair B."/>
            <person name="Sperling S."/>
            <person name="Stupka E."/>
            <person name="Sugiura K."/>
            <person name="Sultana R."/>
            <person name="Takenaka Y."/>
            <person name="Taki K."/>
            <person name="Tammoja K."/>
            <person name="Tan S.L."/>
            <person name="Tang S."/>
            <person name="Taylor M.S."/>
            <person name="Tegner J."/>
            <person name="Teichmann S.A."/>
            <person name="Ueda H.R."/>
            <person name="van Nimwegen E."/>
            <person name="Verardo R."/>
            <person name="Wei C.L."/>
            <person name="Yagi K."/>
            <person name="Yamanishi H."/>
            <person name="Zabarovsky E."/>
            <person name="Zhu S."/>
            <person name="Zimmer A."/>
            <person name="Hide W."/>
            <person name="Bult C."/>
            <person name="Grimmond S.M."/>
            <person name="Teasdale R.D."/>
            <person name="Liu E.T."/>
            <person name="Brusic V."/>
            <person name="Quackenbush J."/>
            <person name="Wahlestedt C."/>
            <person name="Mattick J.S."/>
            <person name="Hume D.A."/>
            <person name="Kai C."/>
            <person name="Sasaki D."/>
            <person name="Tomaru Y."/>
            <person name="Fukuda S."/>
            <person name="Kanamori-Katayama M."/>
            <person name="Suzuki M."/>
            <person name="Aoki J."/>
            <person name="Arakawa T."/>
            <person name="Iida J."/>
            <person name="Imamura K."/>
            <person name="Itoh M."/>
            <person name="Kato T."/>
            <person name="Kawaji H."/>
            <person name="Kawagashira N."/>
            <person name="Kawashima T."/>
            <person name="Kojima M."/>
            <person name="Kondo S."/>
            <person name="Konno H."/>
            <person name="Nakano K."/>
            <person name="Ninomiya N."/>
            <person name="Nishio T."/>
            <person name="Okada M."/>
            <person name="Plessy C."/>
            <person name="Shibata K."/>
            <person name="Shiraki T."/>
            <person name="Suzuki S."/>
            <person name="Tagami M."/>
            <person name="Waki K."/>
            <person name="Watahiki A."/>
            <person name="Okamura-Oho Y."/>
            <person name="Suzuki H."/>
            <person name="Kawai J."/>
            <person name="Hayashizaki Y."/>
        </authorList>
    </citation>
    <scope>NUCLEOTIDE SEQUENCE [LARGE SCALE MRNA]</scope>
    <source>
        <strain>C57BL/6J</strain>
        <tissue>Bone marrow</tissue>
        <tissue>Diencephalon</tissue>
        <tissue>Embryo</tissue>
        <tissue>Head</tissue>
        <tissue>Thymus</tissue>
    </source>
</reference>
<reference key="2">
    <citation type="journal article" date="2015" name="PLoS Genet.">
        <title>Alkaline Ceramidase 3 Deficiency Results in Purkinje Cell Degeneration and Cerebellar Ataxia Due to Dyshomeostasis of Sphingolipids in the Brain.</title>
        <authorList>
            <person name="Wang K."/>
            <person name="Xu R."/>
            <person name="Schrandt J."/>
            <person name="Shah P."/>
            <person name="Gong Y.Z."/>
            <person name="Preston C."/>
            <person name="Wang L."/>
            <person name="Yi J.K."/>
            <person name="Lin C.L."/>
            <person name="Sun W."/>
            <person name="Spyropoulos D.D."/>
            <person name="Rhee S."/>
            <person name="Li M."/>
            <person name="Zhou J."/>
            <person name="Ge S."/>
            <person name="Zhang G."/>
            <person name="Snider A.J."/>
            <person name="Hannun Y.A."/>
            <person name="Obeid L.M."/>
            <person name="Mao C."/>
        </authorList>
    </citation>
    <scope>FUNCTION</scope>
    <scope>CATALYTIC ACTIVITY</scope>
    <scope>PATHWAY</scope>
    <scope>TISSUE SPECIFICITY</scope>
    <scope>DISRUPTION PHENOTYPE</scope>
</reference>
<reference key="3">
    <citation type="journal article" date="2016" name="Cell Death Dis.">
        <title>Alkaline ceramidase 3 deficiency aggravates colitis and colitis-associated tumorigenesis in mice by hyperactivating the innate immune system.</title>
        <authorList>
            <person name="Wang K."/>
            <person name="Xu R."/>
            <person name="Snider A.J."/>
            <person name="Schrandt J."/>
            <person name="Li Y."/>
            <person name="Bialkowska A.B."/>
            <person name="Li M."/>
            <person name="Zhou J."/>
            <person name="Hannun Y.A."/>
            <person name="Obeid L.M."/>
            <person name="Yang V.W."/>
            <person name="Mao C."/>
        </authorList>
    </citation>
    <scope>FUNCTION</scope>
    <scope>INDUCTION</scope>
    <scope>DISRUPTION PHENOTYPE</scope>
</reference>
<organism>
    <name type="scientific">Mus musculus</name>
    <name type="common">Mouse</name>
    <dbReference type="NCBI Taxonomy" id="10090"/>
    <lineage>
        <taxon>Eukaryota</taxon>
        <taxon>Metazoa</taxon>
        <taxon>Chordata</taxon>
        <taxon>Craniata</taxon>
        <taxon>Vertebrata</taxon>
        <taxon>Euteleostomi</taxon>
        <taxon>Mammalia</taxon>
        <taxon>Eutheria</taxon>
        <taxon>Euarchontoglires</taxon>
        <taxon>Glires</taxon>
        <taxon>Rodentia</taxon>
        <taxon>Myomorpha</taxon>
        <taxon>Muroidea</taxon>
        <taxon>Muridae</taxon>
        <taxon>Murinae</taxon>
        <taxon>Mus</taxon>
        <taxon>Mus</taxon>
    </lineage>
</organism>
<keyword id="KW-0106">Calcium</keyword>
<keyword id="KW-0256">Endoplasmic reticulum</keyword>
<keyword id="KW-0333">Golgi apparatus</keyword>
<keyword id="KW-0378">Hydrolase</keyword>
<keyword id="KW-0443">Lipid metabolism</keyword>
<keyword id="KW-0472">Membrane</keyword>
<keyword id="KW-0479">Metal-binding</keyword>
<keyword id="KW-1185">Reference proteome</keyword>
<keyword id="KW-0746">Sphingolipid metabolism</keyword>
<keyword id="KW-0812">Transmembrane</keyword>
<keyword id="KW-1133">Transmembrane helix</keyword>
<keyword id="KW-0862">Zinc</keyword>
<dbReference type="EC" id="3.5.1.-" evidence="2"/>
<dbReference type="EC" id="3.5.1.23" evidence="2"/>
<dbReference type="EMBL" id="AK004287">
    <property type="protein sequence ID" value="BAB23250.1"/>
    <property type="molecule type" value="mRNA"/>
</dbReference>
<dbReference type="EMBL" id="AK011668">
    <property type="protein sequence ID" value="BAB27768.1"/>
    <property type="molecule type" value="mRNA"/>
</dbReference>
<dbReference type="EMBL" id="AK017361">
    <property type="protein sequence ID" value="BAB30708.1"/>
    <property type="molecule type" value="mRNA"/>
</dbReference>
<dbReference type="EMBL" id="AK080977">
    <property type="protein sequence ID" value="BAC38101.1"/>
    <property type="molecule type" value="mRNA"/>
</dbReference>
<dbReference type="EMBL" id="AK150629">
    <property type="protein sequence ID" value="BAE29719.1"/>
    <property type="molecule type" value="mRNA"/>
</dbReference>
<dbReference type="EMBL" id="AK162403">
    <property type="protein sequence ID" value="BAE36897.1"/>
    <property type="molecule type" value="mRNA"/>
</dbReference>
<dbReference type="CCDS" id="CCDS21468.1"/>
<dbReference type="RefSeq" id="NP_079684.2">
    <property type="nucleotide sequence ID" value="NM_025408.3"/>
</dbReference>
<dbReference type="SMR" id="Q9D099"/>
<dbReference type="FunCoup" id="Q9D099">
    <property type="interactions" value="976"/>
</dbReference>
<dbReference type="STRING" id="10090.ENSMUSP00000033020"/>
<dbReference type="BindingDB" id="Q9D099"/>
<dbReference type="ChEMBL" id="CHEMBL4879509"/>
<dbReference type="GlyGen" id="Q9D099">
    <property type="glycosylation" value="1 site"/>
</dbReference>
<dbReference type="PhosphoSitePlus" id="Q9D099"/>
<dbReference type="PaxDb" id="10090-ENSMUSP00000033020"/>
<dbReference type="ProteomicsDB" id="285837"/>
<dbReference type="Antibodypedia" id="53464">
    <property type="antibodies" value="121 antibodies from 25 providers"/>
</dbReference>
<dbReference type="DNASU" id="66190"/>
<dbReference type="Ensembl" id="ENSMUST00000033020.14">
    <property type="protein sequence ID" value="ENSMUSP00000033020.8"/>
    <property type="gene ID" value="ENSMUSG00000030760.15"/>
</dbReference>
<dbReference type="GeneID" id="66190"/>
<dbReference type="KEGG" id="mmu:66190"/>
<dbReference type="UCSC" id="uc009ikg.1">
    <property type="organism name" value="mouse"/>
</dbReference>
<dbReference type="AGR" id="MGI:1913440"/>
<dbReference type="CTD" id="55331"/>
<dbReference type="MGI" id="MGI:1913440">
    <property type="gene designation" value="Acer3"/>
</dbReference>
<dbReference type="VEuPathDB" id="HostDB:ENSMUSG00000030760"/>
<dbReference type="eggNOG" id="KOG2329">
    <property type="taxonomic scope" value="Eukaryota"/>
</dbReference>
<dbReference type="GeneTree" id="ENSGT00730000110920"/>
<dbReference type="HOGENOM" id="CLU_063293_3_2_1"/>
<dbReference type="InParanoid" id="Q9D099"/>
<dbReference type="OMA" id="IMFEPLR"/>
<dbReference type="OrthoDB" id="187171at2759"/>
<dbReference type="PhylomeDB" id="Q9D099"/>
<dbReference type="TreeFam" id="TF313019"/>
<dbReference type="BRENDA" id="3.5.1.23">
    <property type="organism ID" value="3474"/>
</dbReference>
<dbReference type="Reactome" id="R-MMU-9845614">
    <property type="pathway name" value="Sphingolipid catabolism"/>
</dbReference>
<dbReference type="UniPathway" id="UPA00222"/>
<dbReference type="BioGRID-ORCS" id="66190">
    <property type="hits" value="3 hits in 79 CRISPR screens"/>
</dbReference>
<dbReference type="ChiTaRS" id="Acer3">
    <property type="organism name" value="mouse"/>
</dbReference>
<dbReference type="PRO" id="PR:Q9D099"/>
<dbReference type="Proteomes" id="UP000000589">
    <property type="component" value="Chromosome 7"/>
</dbReference>
<dbReference type="RNAct" id="Q9D099">
    <property type="molecule type" value="protein"/>
</dbReference>
<dbReference type="Bgee" id="ENSMUSG00000030760">
    <property type="expression patterns" value="Expressed in humerus cartilage element and 224 other cell types or tissues"/>
</dbReference>
<dbReference type="ExpressionAtlas" id="Q9D099">
    <property type="expression patterns" value="baseline and differential"/>
</dbReference>
<dbReference type="GO" id="GO:0005789">
    <property type="term" value="C:endoplasmic reticulum membrane"/>
    <property type="evidence" value="ECO:0000250"/>
    <property type="project" value="UniProtKB"/>
</dbReference>
<dbReference type="GO" id="GO:0000139">
    <property type="term" value="C:Golgi membrane"/>
    <property type="evidence" value="ECO:0000250"/>
    <property type="project" value="UniProtKB"/>
</dbReference>
<dbReference type="GO" id="GO:0005509">
    <property type="term" value="F:calcium ion binding"/>
    <property type="evidence" value="ECO:0000250"/>
    <property type="project" value="UniProtKB"/>
</dbReference>
<dbReference type="GO" id="GO:0017040">
    <property type="term" value="F:N-acylsphingosine amidohydrolase activity"/>
    <property type="evidence" value="ECO:0000250"/>
    <property type="project" value="UniProtKB"/>
</dbReference>
<dbReference type="GO" id="GO:0008270">
    <property type="term" value="F:zinc ion binding"/>
    <property type="evidence" value="ECO:0000250"/>
    <property type="project" value="UniProtKB"/>
</dbReference>
<dbReference type="GO" id="GO:0046514">
    <property type="term" value="P:ceramide catabolic process"/>
    <property type="evidence" value="ECO:0000315"/>
    <property type="project" value="UniProtKB"/>
</dbReference>
<dbReference type="GO" id="GO:0006954">
    <property type="term" value="P:inflammatory response"/>
    <property type="evidence" value="ECO:0000315"/>
    <property type="project" value="UniProtKB"/>
</dbReference>
<dbReference type="GO" id="GO:0042552">
    <property type="term" value="P:myelination"/>
    <property type="evidence" value="ECO:0000250"/>
    <property type="project" value="UniProtKB"/>
</dbReference>
<dbReference type="GO" id="GO:0071602">
    <property type="term" value="P:phytosphingosine biosynthetic process"/>
    <property type="evidence" value="ECO:0000250"/>
    <property type="project" value="UniProtKB"/>
</dbReference>
<dbReference type="GO" id="GO:0008284">
    <property type="term" value="P:positive regulation of cell population proliferation"/>
    <property type="evidence" value="ECO:0007669"/>
    <property type="project" value="Ensembl"/>
</dbReference>
<dbReference type="GO" id="GO:0043067">
    <property type="term" value="P:regulation of programmed cell death"/>
    <property type="evidence" value="ECO:0000250"/>
    <property type="project" value="UniProtKB"/>
</dbReference>
<dbReference type="GO" id="GO:0046512">
    <property type="term" value="P:sphingosine biosynthetic process"/>
    <property type="evidence" value="ECO:0000315"/>
    <property type="project" value="UniProtKB"/>
</dbReference>
<dbReference type="InterPro" id="IPR008901">
    <property type="entry name" value="ACER"/>
</dbReference>
<dbReference type="PANTHER" id="PTHR46187">
    <property type="entry name" value="ALKALINE CERAMIDASE 3"/>
    <property type="match status" value="1"/>
</dbReference>
<dbReference type="PANTHER" id="PTHR46187:SF3">
    <property type="entry name" value="ALKALINE CERAMIDASE 3"/>
    <property type="match status" value="1"/>
</dbReference>
<dbReference type="Pfam" id="PF05875">
    <property type="entry name" value="Ceramidase"/>
    <property type="match status" value="1"/>
</dbReference>
<accession>Q9D099</accession>
<accession>Q542R2</accession>
<accession>Q9D0X4</accession>
<accession>Q9D3J4</accession>
<evidence type="ECO:0000250" key="1">
    <source>
        <dbReference type="UniProtKB" id="Q9NUN7"/>
    </source>
</evidence>
<evidence type="ECO:0000269" key="2">
    <source>
    </source>
</evidence>
<evidence type="ECO:0000269" key="3">
    <source>
    </source>
</evidence>
<evidence type="ECO:0000303" key="4">
    <source>
    </source>
</evidence>
<evidence type="ECO:0000305" key="5"/>
<evidence type="ECO:0000305" key="6">
    <source>
    </source>
</evidence>
<protein>
    <recommendedName>
        <fullName>Alkaline ceramidase 3</fullName>
        <shortName>AlkCDase 3</shortName>
        <shortName>Alkaline CDase 3</shortName>
        <ecNumber evidence="2">3.5.1.-</ecNumber>
        <ecNumber evidence="2">3.5.1.23</ecNumber>
    </recommendedName>
    <alternativeName>
        <fullName>Alkaline phytoceramidase</fullName>
        <shortName>aPHC</shortName>
    </alternativeName>
</protein>
<comment type="function">
    <text evidence="1 2 3 4">Endoplasmic reticulum and Golgi ceramidase that catalyzes the hydrolysis of unsaturated long-chain C18:1-, C20:1- and C20:4-ceramides, dihydroceramides and phytoceramides into sphingoid bases like sphingosine and free fatty acids at alkaline pH (PubMed:26474409). Ceramides, sphingosine, and its phosphorylated form sphingosine-1-phosphate are bioactive lipids that mediate cellular signaling pathways regulating several biological processes including cell proliferation, apoptosis and differentiation (PubMed:26474409). Controls the generation of sphingosine in erythrocytes, and thereby sphingosine-1-phosphate in plasma (By similarity). Through the regulation of ceramides and sphingosine-1-phosphate homeostasis in the brain may play a role in neurons survival and function (PubMed:26474409). By regulating the levels of pro-inflammatory ceramides in immune cells and tissues, may modulate the inflammatory response (PubMed:26938296).</text>
</comment>
<comment type="catalytic activity">
    <reaction evidence="2">
        <text>an N-acyl-(4R)-4-hydroxysphinganine + H2O = (4R)-hydroxysphinganine + a fatty acid</text>
        <dbReference type="Rhea" id="RHEA:33555"/>
        <dbReference type="ChEBI" id="CHEBI:15377"/>
        <dbReference type="ChEBI" id="CHEBI:28868"/>
        <dbReference type="ChEBI" id="CHEBI:31998"/>
        <dbReference type="ChEBI" id="CHEBI:64124"/>
    </reaction>
    <physiologicalReaction direction="left-to-right" evidence="6">
        <dbReference type="Rhea" id="RHEA:33556"/>
    </physiologicalReaction>
</comment>
<comment type="catalytic activity">
    <reaction evidence="1">
        <text>N-(5Z,8Z,11Z,14Z-eicosatetraenoyl)-sphing-4-enine + H2O = sphing-4-enine + (5Z,8Z,11Z,14Z)-eicosatetraenoate</text>
        <dbReference type="Rhea" id="RHEA:45348"/>
        <dbReference type="ChEBI" id="CHEBI:15377"/>
        <dbReference type="ChEBI" id="CHEBI:32395"/>
        <dbReference type="ChEBI" id="CHEBI:57756"/>
        <dbReference type="ChEBI" id="CHEBI:85198"/>
    </reaction>
    <physiologicalReaction direction="left-to-right" evidence="1">
        <dbReference type="Rhea" id="RHEA:45349"/>
    </physiologicalReaction>
</comment>
<comment type="catalytic activity">
    <reaction evidence="1">
        <text>N-(5Z,8Z,11Z,14Z-eicosatetraenoyl)-sphinganine + H2O = sphinganine + (5Z,8Z,11Z,14Z)-eicosatetraenoate</text>
        <dbReference type="Rhea" id="RHEA:45376"/>
        <dbReference type="ChEBI" id="CHEBI:15377"/>
        <dbReference type="ChEBI" id="CHEBI:32395"/>
        <dbReference type="ChEBI" id="CHEBI:57817"/>
        <dbReference type="ChEBI" id="CHEBI:85206"/>
    </reaction>
    <physiologicalReaction direction="left-to-right" evidence="1">
        <dbReference type="Rhea" id="RHEA:45377"/>
    </physiologicalReaction>
</comment>
<comment type="catalytic activity">
    <reaction evidence="1">
        <text>N-(5Z,8Z,11Z,14Z-eicosatetraenoyl)-(4R)-hydroxysphinganine + H2O = (4R)-hydroxysphinganine + (5Z,8Z,11Z,14Z)-eicosatetraenoate</text>
        <dbReference type="Rhea" id="RHEA:45380"/>
        <dbReference type="ChEBI" id="CHEBI:15377"/>
        <dbReference type="ChEBI" id="CHEBI:32395"/>
        <dbReference type="ChEBI" id="CHEBI:64124"/>
        <dbReference type="ChEBI" id="CHEBI:85207"/>
    </reaction>
    <physiologicalReaction direction="left-to-right" evidence="1">
        <dbReference type="Rhea" id="RHEA:45381"/>
    </physiologicalReaction>
</comment>
<comment type="catalytic activity">
    <reaction evidence="1">
        <text>N-(11Z-eicosenoyl)-sphing-4-enine + H2O = (11Z)-eicosenoate + sphing-4-enine</text>
        <dbReference type="Rhea" id="RHEA:45356"/>
        <dbReference type="ChEBI" id="CHEBI:15377"/>
        <dbReference type="ChEBI" id="CHEBI:32426"/>
        <dbReference type="ChEBI" id="CHEBI:57756"/>
        <dbReference type="ChEBI" id="CHEBI:85284"/>
    </reaction>
    <physiologicalReaction direction="left-to-right" evidence="1">
        <dbReference type="Rhea" id="RHEA:45357"/>
    </physiologicalReaction>
</comment>
<comment type="catalytic activity">
    <reaction evidence="1">
        <text>N-(11Z-eicosenoyl)-sphinganine + H2O = (11Z)-eicosenoate + sphinganine</text>
        <dbReference type="Rhea" id="RHEA:45360"/>
        <dbReference type="ChEBI" id="CHEBI:15377"/>
        <dbReference type="ChEBI" id="CHEBI:32426"/>
        <dbReference type="ChEBI" id="CHEBI:57817"/>
        <dbReference type="ChEBI" id="CHEBI:85285"/>
    </reaction>
    <physiologicalReaction direction="left-to-right" evidence="1">
        <dbReference type="Rhea" id="RHEA:45361"/>
    </physiologicalReaction>
</comment>
<comment type="catalytic activity">
    <reaction evidence="1">
        <text>N-(11Z-eicosenoyl)-(4R)-hydroxysphinganine + H2O = (11Z)-eicosenoate + (4R)-hydroxysphinganine</text>
        <dbReference type="Rhea" id="RHEA:45364"/>
        <dbReference type="ChEBI" id="CHEBI:15377"/>
        <dbReference type="ChEBI" id="CHEBI:32426"/>
        <dbReference type="ChEBI" id="CHEBI:64124"/>
        <dbReference type="ChEBI" id="CHEBI:85286"/>
    </reaction>
    <physiologicalReaction direction="left-to-right" evidence="1">
        <dbReference type="Rhea" id="RHEA:45365"/>
    </physiologicalReaction>
</comment>
<comment type="catalytic activity">
    <reaction evidence="2">
        <text>N-(9Z-octadecenoyl)-sphing-4-enine + H2O = sphing-4-enine + (9Z)-octadecenoate</text>
        <dbReference type="Rhea" id="RHEA:41299"/>
        <dbReference type="ChEBI" id="CHEBI:15377"/>
        <dbReference type="ChEBI" id="CHEBI:30823"/>
        <dbReference type="ChEBI" id="CHEBI:57756"/>
        <dbReference type="ChEBI" id="CHEBI:77996"/>
    </reaction>
    <physiologicalReaction direction="left-to-right" evidence="6">
        <dbReference type="Rhea" id="RHEA:41300"/>
    </physiologicalReaction>
</comment>
<comment type="catalytic activity">
    <reaction evidence="1">
        <text>N-(9Z-octadecenoyl)-sphinganine + H2O = sphinganine + (9Z)-octadecenoate</text>
        <dbReference type="Rhea" id="RHEA:45372"/>
        <dbReference type="ChEBI" id="CHEBI:15377"/>
        <dbReference type="ChEBI" id="CHEBI:30823"/>
        <dbReference type="ChEBI" id="CHEBI:57817"/>
        <dbReference type="ChEBI" id="CHEBI:74100"/>
    </reaction>
    <physiologicalReaction direction="left-to-right" evidence="1">
        <dbReference type="Rhea" id="RHEA:45373"/>
    </physiologicalReaction>
</comment>
<comment type="catalytic activity">
    <reaction evidence="1">
        <text>N-(9Z-octadecenoyl)-(4R)-hydroxysphinganine + H2O = (4R)-hydroxysphinganine + (9Z)-octadecenoate</text>
        <dbReference type="Rhea" id="RHEA:45368"/>
        <dbReference type="ChEBI" id="CHEBI:15377"/>
        <dbReference type="ChEBI" id="CHEBI:30823"/>
        <dbReference type="ChEBI" id="CHEBI:64124"/>
        <dbReference type="ChEBI" id="CHEBI:85204"/>
    </reaction>
    <physiologicalReaction direction="left-to-right" evidence="1">
        <dbReference type="Rhea" id="RHEA:45369"/>
    </physiologicalReaction>
</comment>
<comment type="catalytic activity">
    <reaction evidence="2">
        <text>an N-acylsphing-4-enine + H2O = sphing-4-enine + a fatty acid</text>
        <dbReference type="Rhea" id="RHEA:20856"/>
        <dbReference type="ChEBI" id="CHEBI:15377"/>
        <dbReference type="ChEBI" id="CHEBI:28868"/>
        <dbReference type="ChEBI" id="CHEBI:52639"/>
        <dbReference type="ChEBI" id="CHEBI:57756"/>
        <dbReference type="EC" id="3.5.1.23"/>
    </reaction>
    <physiologicalReaction direction="left-to-right" evidence="6">
        <dbReference type="Rhea" id="RHEA:20857"/>
    </physiologicalReaction>
</comment>
<comment type="catalytic activity">
    <reaction evidence="1">
        <text>an N-acylsphinganine + H2O = sphinganine + a fatty acid</text>
        <dbReference type="Rhea" id="RHEA:33551"/>
        <dbReference type="ChEBI" id="CHEBI:15377"/>
        <dbReference type="ChEBI" id="CHEBI:28868"/>
        <dbReference type="ChEBI" id="CHEBI:31488"/>
        <dbReference type="ChEBI" id="CHEBI:57817"/>
    </reaction>
    <physiologicalReaction direction="left-to-right" evidence="1">
        <dbReference type="Rhea" id="RHEA:33552"/>
    </physiologicalReaction>
</comment>
<comment type="cofactor">
    <cofactor evidence="1">
        <name>Zn(2+)</name>
        <dbReference type="ChEBI" id="CHEBI:29105"/>
    </cofactor>
</comment>
<comment type="activity regulation">
    <text evidence="1">Activated by Ca(2+) and inhibited by Zn(2+).</text>
</comment>
<comment type="pathway">
    <text evidence="2">Lipid metabolism; sphingolipid metabolism.</text>
</comment>
<comment type="subcellular location">
    <subcellularLocation>
        <location evidence="1">Endoplasmic reticulum membrane</location>
        <topology evidence="1">Multi-pass membrane protein</topology>
    </subcellularLocation>
    <subcellularLocation>
        <location evidence="1">Golgi apparatus membrane</location>
        <topology evidence="1">Multi-pass membrane protein</topology>
    </subcellularLocation>
</comment>
<comment type="tissue specificity">
    <text evidence="2">Up-regulated with age in cerebeLlum and cerebrum.</text>
</comment>
<comment type="induction">
    <text evidence="3">Down-regulated in immune cells and colonic epithelial cells by lipopolysaccharides/LPS.</text>
</comment>
<comment type="disruption phenotype">
    <text evidence="2 3">Homozygous knockout mice are viable and do not display overt phenotype with regard to fertility, body weight and anatomy (PubMed:26474409). They exhibit a decrease in ceramidase activity in brain, liver and lung tissues leading to the age-dependent accumulation of unsaturated long-chain C18:1-ceramides and the concomitant decrease in sphingosine and sphingosine-1-phosphate (PubMed:26474409). This is associated with a premature degeneration of Purkinje cells and age-dependent defects in motor coordination, skilled hindlimb function and balance capabilities (PubMed:26474409). Knockout mice also display exacerbated systemic inflammatory response (PubMed:26938296).</text>
</comment>
<comment type="similarity">
    <text evidence="5">Belongs to the alkaline ceramidase family.</text>
</comment>
<feature type="chain" id="PRO_0000212464" description="Alkaline ceramidase 3">
    <location>
        <begin position="1"/>
        <end position="267"/>
    </location>
</feature>
<feature type="topological domain" description="Cytoplasmic" evidence="5">
    <location>
        <begin position="1"/>
        <end position="33"/>
    </location>
</feature>
<feature type="transmembrane region" description="Helical" evidence="1">
    <location>
        <begin position="34"/>
        <end position="55"/>
    </location>
</feature>
<feature type="topological domain" description="Lumenal" evidence="5">
    <location>
        <begin position="56"/>
        <end position="61"/>
    </location>
</feature>
<feature type="transmembrane region" description="Helical" evidence="1">
    <location>
        <begin position="62"/>
        <end position="82"/>
    </location>
</feature>
<feature type="topological domain" description="Cytoplasmic" evidence="5">
    <location>
        <begin position="83"/>
        <end position="87"/>
    </location>
</feature>
<feature type="transmembrane region" description="Helical" evidence="1">
    <location>
        <begin position="88"/>
        <end position="108"/>
    </location>
</feature>
<feature type="topological domain" description="Lumenal" evidence="5">
    <location>
        <begin position="109"/>
        <end position="118"/>
    </location>
</feature>
<feature type="transmembrane region" description="Helical" evidence="1">
    <location>
        <begin position="119"/>
        <end position="139"/>
    </location>
</feature>
<feature type="topological domain" description="Cytoplasmic" evidence="5">
    <location>
        <begin position="140"/>
        <end position="141"/>
    </location>
</feature>
<feature type="transmembrane region" description="Helical" evidence="1">
    <location>
        <begin position="142"/>
        <end position="162"/>
    </location>
</feature>
<feature type="topological domain" description="Lumenal" evidence="5">
    <location>
        <begin position="163"/>
        <end position="173"/>
    </location>
</feature>
<feature type="transmembrane region" description="Helical" evidence="1">
    <location>
        <begin position="174"/>
        <end position="194"/>
    </location>
</feature>
<feature type="topological domain" description="Cytoplasmic" evidence="5">
    <location>
        <begin position="195"/>
        <end position="215"/>
    </location>
</feature>
<feature type="transmembrane region" description="Helical" evidence="1">
    <location>
        <begin position="216"/>
        <end position="236"/>
    </location>
</feature>
<feature type="topological domain" description="Lumenal" evidence="5">
    <location>
        <begin position="237"/>
        <end position="267"/>
    </location>
</feature>
<feature type="binding site" evidence="1">
    <location>
        <position position="19"/>
    </location>
    <ligand>
        <name>Ca(2+)</name>
        <dbReference type="ChEBI" id="CHEBI:29108"/>
    </ligand>
</feature>
<feature type="binding site" evidence="1">
    <location>
        <position position="20"/>
    </location>
    <ligand>
        <name>Ca(2+)</name>
        <dbReference type="ChEBI" id="CHEBI:29108"/>
    </ligand>
</feature>
<feature type="binding site" evidence="1">
    <location>
        <position position="22"/>
    </location>
    <ligand>
        <name>Ca(2+)</name>
        <dbReference type="ChEBI" id="CHEBI:29108"/>
    </ligand>
</feature>
<feature type="binding site" evidence="1">
    <location>
        <position position="24"/>
    </location>
    <ligand>
        <name>Ca(2+)</name>
        <dbReference type="ChEBI" id="CHEBI:29108"/>
    </ligand>
</feature>
<feature type="binding site" evidence="1">
    <location>
        <position position="33"/>
    </location>
    <ligand>
        <name>Ca(2+)</name>
        <dbReference type="ChEBI" id="CHEBI:29108"/>
    </ligand>
</feature>
<feature type="binding site" evidence="1">
    <location>
        <position position="81"/>
    </location>
    <ligand>
        <name>Zn(2+)</name>
        <dbReference type="ChEBI" id="CHEBI:29105"/>
        <note>catalytic</note>
    </ligand>
</feature>
<feature type="binding site" evidence="1">
    <location>
        <position position="217"/>
    </location>
    <ligand>
        <name>Zn(2+)</name>
        <dbReference type="ChEBI" id="CHEBI:29105"/>
        <note>catalytic</note>
    </ligand>
</feature>
<feature type="binding site" evidence="1">
    <location>
        <position position="221"/>
    </location>
    <ligand>
        <name>Zn(2+)</name>
        <dbReference type="ChEBI" id="CHEBI:29105"/>
        <note>catalytic</note>
    </ligand>
</feature>
<feature type="sequence conflict" description="In Ref. 1; BAB23250." evidence="5" ref="1">
    <original>C</original>
    <variation>F</variation>
    <location>
        <position position="110"/>
    </location>
</feature>
<feature type="sequence conflict" description="In Ref. 1; BAB30708." evidence="5" ref="1">
    <original>E</original>
    <variation>D</variation>
    <location>
        <position position="262"/>
    </location>
</feature>
<proteinExistence type="evidence at protein level"/>
<name>ACER3_MOUSE</name>
<sequence>MAPAVDRKGYWGPTTSTLDWCEENYVVTLFVAEFWNTVSNLIMIIPPIFGAIQGIRDRLEKRYIAAYLALTVVGMGSWCFHMTLKYEMQLLDELPMIYSCCIFVYCMFECFKTKSSINYHLLFTLFLYSLTVTTIYLKVKEPIFHQVMYGMLVFTLVLRSIYIVTWVYPWLRGLGYTSLTVFLLGFLLWNIDNIFCDSLRNFRKRVPPVLGVTTQFHAWWHILTGLGSYLHILFSLYTRTLYLRYRPKVKFLFGIWPAVMFEPQRKH</sequence>
<gene>
    <name type="primary">Acer3</name>
    <name type="synonym">Aphc</name>
    <name type="synonym">Phca</name>
</gene>